<accession>Q71MR3</accession>
<name>CYB_DASFU</name>
<keyword id="KW-0249">Electron transport</keyword>
<keyword id="KW-0349">Heme</keyword>
<keyword id="KW-0408">Iron</keyword>
<keyword id="KW-0472">Membrane</keyword>
<keyword id="KW-0479">Metal-binding</keyword>
<keyword id="KW-0496">Mitochondrion</keyword>
<keyword id="KW-0999">Mitochondrion inner membrane</keyword>
<keyword id="KW-0679">Respiratory chain</keyword>
<keyword id="KW-0812">Transmembrane</keyword>
<keyword id="KW-1133">Transmembrane helix</keyword>
<keyword id="KW-0813">Transport</keyword>
<keyword id="KW-0830">Ubiquinone</keyword>
<comment type="function">
    <text evidence="2">Component of the ubiquinol-cytochrome c reductase complex (complex III or cytochrome b-c1 complex) that is part of the mitochondrial respiratory chain. The b-c1 complex mediates electron transfer from ubiquinol to cytochrome c. Contributes to the generation of a proton gradient across the mitochondrial membrane that is then used for ATP synthesis.</text>
</comment>
<comment type="cofactor">
    <cofactor evidence="2">
        <name>heme b</name>
        <dbReference type="ChEBI" id="CHEBI:60344"/>
    </cofactor>
    <text evidence="2">Binds 2 heme b groups non-covalently.</text>
</comment>
<comment type="subunit">
    <text evidence="2">The cytochrome bc1 complex contains 11 subunits: 3 respiratory subunits (MT-CYB, CYC1 and UQCRFS1), 2 core proteins (UQCRC1 and UQCRC2) and 6 low-molecular weight proteins (UQCRH/QCR6, UQCRB/QCR7, UQCRQ/QCR8, UQCR10/QCR9, UQCR11/QCR10 and a cleavage product of UQCRFS1). This cytochrome bc1 complex then forms a dimer.</text>
</comment>
<comment type="subcellular location">
    <subcellularLocation>
        <location evidence="2">Mitochondrion inner membrane</location>
        <topology evidence="2">Multi-pass membrane protein</topology>
    </subcellularLocation>
</comment>
<comment type="miscellaneous">
    <text evidence="1">Heme 1 (or BL or b562) is low-potential and absorbs at about 562 nm, and heme 2 (or BH or b566) is high-potential and absorbs at about 566 nm.</text>
</comment>
<comment type="similarity">
    <text evidence="3 4">Belongs to the cytochrome b family.</text>
</comment>
<comment type="caution">
    <text evidence="2">The full-length protein contains only eight transmembrane helices, not nine as predicted by bioinformatics tools.</text>
</comment>
<proteinExistence type="inferred from homology"/>
<sequence length="379" mass="42687">MTHLRKSHPLIKIINHSFIDLPTPSNISAWWNFGSLLGICLMMQILTGLFLAMHYTADTTTAFSSVTHICRDVNYGWLIRYLHANGASMFFILIYLHIGRGIYYGSYTFSETWNIGILLLLAVMATAFMGYVLPXGQMSFWGATVITNLLSAIPYIGTTLVEWIWGGFSVDKATLTRFFAFHFILPFIIVALVMTHLLFLHETGSNNPSGLNSDSDKIPFHPYYTIKDIMGFMFMGFTILLLVLFSPDLLGDPDNYSPANPLNTPPHIKPEWYFLFAYAILRSIPNKLGGVVALLASILVLALFPTMHLSKQRSMTFRPISQCLLWVLTANLAILTWIGGQPVEHPYILIGQVASMTYFLTILILMPLSSMAENKILKW</sequence>
<dbReference type="EMBL" id="AF437784">
    <property type="protein sequence ID" value="AAQ04518.1"/>
    <property type="molecule type" value="Genomic_DNA"/>
</dbReference>
<dbReference type="GO" id="GO:0005743">
    <property type="term" value="C:mitochondrial inner membrane"/>
    <property type="evidence" value="ECO:0007669"/>
    <property type="project" value="UniProtKB-SubCell"/>
</dbReference>
<dbReference type="GO" id="GO:0045275">
    <property type="term" value="C:respiratory chain complex III"/>
    <property type="evidence" value="ECO:0007669"/>
    <property type="project" value="InterPro"/>
</dbReference>
<dbReference type="GO" id="GO:0046872">
    <property type="term" value="F:metal ion binding"/>
    <property type="evidence" value="ECO:0007669"/>
    <property type="project" value="UniProtKB-KW"/>
</dbReference>
<dbReference type="GO" id="GO:0008121">
    <property type="term" value="F:ubiquinol-cytochrome-c reductase activity"/>
    <property type="evidence" value="ECO:0007669"/>
    <property type="project" value="InterPro"/>
</dbReference>
<dbReference type="GO" id="GO:0006122">
    <property type="term" value="P:mitochondrial electron transport, ubiquinol to cytochrome c"/>
    <property type="evidence" value="ECO:0007669"/>
    <property type="project" value="TreeGrafter"/>
</dbReference>
<dbReference type="CDD" id="cd00290">
    <property type="entry name" value="cytochrome_b_C"/>
    <property type="match status" value="1"/>
</dbReference>
<dbReference type="CDD" id="cd00284">
    <property type="entry name" value="Cytochrome_b_N"/>
    <property type="match status" value="1"/>
</dbReference>
<dbReference type="FunFam" id="1.20.810.10:FF:000002">
    <property type="entry name" value="Cytochrome b"/>
    <property type="match status" value="1"/>
</dbReference>
<dbReference type="Gene3D" id="1.20.810.10">
    <property type="entry name" value="Cytochrome Bc1 Complex, Chain C"/>
    <property type="match status" value="1"/>
</dbReference>
<dbReference type="InterPro" id="IPR005798">
    <property type="entry name" value="Cyt_b/b6_C"/>
</dbReference>
<dbReference type="InterPro" id="IPR036150">
    <property type="entry name" value="Cyt_b/b6_C_sf"/>
</dbReference>
<dbReference type="InterPro" id="IPR005797">
    <property type="entry name" value="Cyt_b/b6_N"/>
</dbReference>
<dbReference type="InterPro" id="IPR027387">
    <property type="entry name" value="Cytb/b6-like_sf"/>
</dbReference>
<dbReference type="InterPro" id="IPR030689">
    <property type="entry name" value="Cytochrome_b"/>
</dbReference>
<dbReference type="InterPro" id="IPR048260">
    <property type="entry name" value="Cytochrome_b_C_euk/bac"/>
</dbReference>
<dbReference type="InterPro" id="IPR048259">
    <property type="entry name" value="Cytochrome_b_N_euk/bac"/>
</dbReference>
<dbReference type="InterPro" id="IPR016174">
    <property type="entry name" value="Di-haem_cyt_TM"/>
</dbReference>
<dbReference type="PANTHER" id="PTHR19271">
    <property type="entry name" value="CYTOCHROME B"/>
    <property type="match status" value="1"/>
</dbReference>
<dbReference type="PANTHER" id="PTHR19271:SF16">
    <property type="entry name" value="CYTOCHROME B"/>
    <property type="match status" value="1"/>
</dbReference>
<dbReference type="Pfam" id="PF00032">
    <property type="entry name" value="Cytochrom_B_C"/>
    <property type="match status" value="1"/>
</dbReference>
<dbReference type="Pfam" id="PF00033">
    <property type="entry name" value="Cytochrome_B"/>
    <property type="match status" value="1"/>
</dbReference>
<dbReference type="PIRSF" id="PIRSF038885">
    <property type="entry name" value="COB"/>
    <property type="match status" value="1"/>
</dbReference>
<dbReference type="SUPFAM" id="SSF81648">
    <property type="entry name" value="a domain/subunit of cytochrome bc1 complex (Ubiquinol-cytochrome c reductase)"/>
    <property type="match status" value="1"/>
</dbReference>
<dbReference type="SUPFAM" id="SSF81342">
    <property type="entry name" value="Transmembrane di-heme cytochromes"/>
    <property type="match status" value="1"/>
</dbReference>
<dbReference type="PROSITE" id="PS51003">
    <property type="entry name" value="CYTB_CTER"/>
    <property type="match status" value="1"/>
</dbReference>
<dbReference type="PROSITE" id="PS51002">
    <property type="entry name" value="CYTB_NTER"/>
    <property type="match status" value="1"/>
</dbReference>
<feature type="chain" id="PRO_0000255032" description="Cytochrome b">
    <location>
        <begin position="1"/>
        <end position="379"/>
    </location>
</feature>
<feature type="transmembrane region" description="Helical" evidence="2">
    <location>
        <begin position="33"/>
        <end position="53"/>
    </location>
</feature>
<feature type="transmembrane region" description="Helical" evidence="2">
    <location>
        <begin position="77"/>
        <end position="98"/>
    </location>
</feature>
<feature type="transmembrane region" description="Helical" evidence="2">
    <location>
        <begin position="113"/>
        <end position="133"/>
    </location>
</feature>
<feature type="transmembrane region" description="Helical" evidence="2">
    <location>
        <begin position="178"/>
        <end position="198"/>
    </location>
</feature>
<feature type="transmembrane region" description="Helical" evidence="2">
    <location>
        <begin position="226"/>
        <end position="246"/>
    </location>
</feature>
<feature type="transmembrane region" description="Helical" evidence="2">
    <location>
        <begin position="288"/>
        <end position="308"/>
    </location>
</feature>
<feature type="transmembrane region" description="Helical" evidence="2">
    <location>
        <begin position="320"/>
        <end position="340"/>
    </location>
</feature>
<feature type="transmembrane region" description="Helical" evidence="2">
    <location>
        <begin position="347"/>
        <end position="367"/>
    </location>
</feature>
<feature type="binding site" description="axial binding residue" evidence="2">
    <location>
        <position position="83"/>
    </location>
    <ligand>
        <name>heme b</name>
        <dbReference type="ChEBI" id="CHEBI:60344"/>
        <label>b562</label>
    </ligand>
    <ligandPart>
        <name>Fe</name>
        <dbReference type="ChEBI" id="CHEBI:18248"/>
    </ligandPart>
</feature>
<feature type="binding site" description="axial binding residue" evidence="2">
    <location>
        <position position="97"/>
    </location>
    <ligand>
        <name>heme b</name>
        <dbReference type="ChEBI" id="CHEBI:60344"/>
        <label>b566</label>
    </ligand>
    <ligandPart>
        <name>Fe</name>
        <dbReference type="ChEBI" id="CHEBI:18248"/>
    </ligandPart>
</feature>
<feature type="binding site" description="axial binding residue" evidence="2">
    <location>
        <position position="182"/>
    </location>
    <ligand>
        <name>heme b</name>
        <dbReference type="ChEBI" id="CHEBI:60344"/>
        <label>b562</label>
    </ligand>
    <ligandPart>
        <name>Fe</name>
        <dbReference type="ChEBI" id="CHEBI:18248"/>
    </ligandPart>
</feature>
<feature type="binding site" description="axial binding residue" evidence="2">
    <location>
        <position position="196"/>
    </location>
    <ligand>
        <name>heme b</name>
        <dbReference type="ChEBI" id="CHEBI:60344"/>
        <label>b566</label>
    </ligand>
    <ligandPart>
        <name>Fe</name>
        <dbReference type="ChEBI" id="CHEBI:18248"/>
    </ligandPart>
</feature>
<feature type="binding site" evidence="2">
    <location>
        <position position="201"/>
    </location>
    <ligand>
        <name>a ubiquinone</name>
        <dbReference type="ChEBI" id="CHEBI:16389"/>
    </ligand>
</feature>
<organism>
    <name type="scientific">Dasyprocta fuliginosa</name>
    <name type="common">Black agouti</name>
    <dbReference type="NCBI Taxonomy" id="193455"/>
    <lineage>
        <taxon>Eukaryota</taxon>
        <taxon>Metazoa</taxon>
        <taxon>Chordata</taxon>
        <taxon>Craniata</taxon>
        <taxon>Vertebrata</taxon>
        <taxon>Euteleostomi</taxon>
        <taxon>Mammalia</taxon>
        <taxon>Eutheria</taxon>
        <taxon>Euarchontoglires</taxon>
        <taxon>Glires</taxon>
        <taxon>Rodentia</taxon>
        <taxon>Hystricomorpha</taxon>
        <taxon>Dasyproctidae</taxon>
        <taxon>Dasyprocta</taxon>
    </lineage>
</organism>
<protein>
    <recommendedName>
        <fullName>Cytochrome b</fullName>
    </recommendedName>
    <alternativeName>
        <fullName>Complex III subunit 3</fullName>
    </alternativeName>
    <alternativeName>
        <fullName>Complex III subunit III</fullName>
    </alternativeName>
    <alternativeName>
        <fullName>Cytochrome b-c1 complex subunit 3</fullName>
    </alternativeName>
    <alternativeName>
        <fullName>Ubiquinol-cytochrome-c reductase complex cytochrome b subunit</fullName>
    </alternativeName>
</protein>
<gene>
    <name type="primary">MT-CYB</name>
    <name type="synonym">COB</name>
    <name type="synonym">CYTB</name>
    <name type="synonym">MTCYB</name>
</gene>
<reference key="1">
    <citation type="journal article" date="2004" name="Biol. J. Linn. Soc. Lond.">
        <title>Geographic patterns of genetic variation in four Neotropical rodents: conservation implications for small game mammals in French Guiana.</title>
        <authorList>
            <person name="Jansen van Vuuren B."/>
            <person name="Kinet S."/>
            <person name="Chopelet J."/>
            <person name="Catzeflis F."/>
        </authorList>
    </citation>
    <scope>NUCLEOTIDE SEQUENCE [GENOMIC DNA]</scope>
</reference>
<geneLocation type="mitochondrion"/>
<evidence type="ECO:0000250" key="1"/>
<evidence type="ECO:0000250" key="2">
    <source>
        <dbReference type="UniProtKB" id="P00157"/>
    </source>
</evidence>
<evidence type="ECO:0000255" key="3">
    <source>
        <dbReference type="PROSITE-ProRule" id="PRU00967"/>
    </source>
</evidence>
<evidence type="ECO:0000255" key="4">
    <source>
        <dbReference type="PROSITE-ProRule" id="PRU00968"/>
    </source>
</evidence>